<sequence>MANKRVLVKFSGEALAGEAGYGIDTKILNFISQEIKSLVEANIEVGIVIGGGNIIRGVTAAQDGIIKRTSGDYMGMLATVINGIAMQEACEHAGLQVRMQTAIKMEQIAEPYINRRAVRHLEKGRVVIFAAGTGNPFFTTDTAATLRAVEIGAEVIIKATKVDGVYDKDPNKFSDAIKLQELSYEQALNDNIKVMDDTSIALAKDNSLPILVCDMFKKGNLLDILQNGNMKNCSIVK</sequence>
<protein>
    <recommendedName>
        <fullName evidence="1">Uridylate kinase</fullName>
        <shortName evidence="1">UK</shortName>
        <ecNumber evidence="1">2.7.4.22</ecNumber>
    </recommendedName>
    <alternativeName>
        <fullName evidence="1">Uridine monophosphate kinase</fullName>
        <shortName evidence="1">UMP kinase</shortName>
        <shortName evidence="1">UMPK</shortName>
    </alternativeName>
</protein>
<reference key="1">
    <citation type="journal article" date="2008" name="Appl. Environ. Microbiol.">
        <title>Genome of the epsilonproteobacterial chemolithoautotroph Sulfurimonas denitrificans.</title>
        <authorList>
            <person name="Sievert S.M."/>
            <person name="Scott K.M."/>
            <person name="Klotz M.G."/>
            <person name="Chain P.S.G."/>
            <person name="Hauser L.J."/>
            <person name="Hemp J."/>
            <person name="Huegler M."/>
            <person name="Land M."/>
            <person name="Lapidus A."/>
            <person name="Larimer F.W."/>
            <person name="Lucas S."/>
            <person name="Malfatti S.A."/>
            <person name="Meyer F."/>
            <person name="Paulsen I.T."/>
            <person name="Ren Q."/>
            <person name="Simon J."/>
            <person name="Bailey K."/>
            <person name="Diaz E."/>
            <person name="Fitzpatrick K.A."/>
            <person name="Glover B."/>
            <person name="Gwatney N."/>
            <person name="Korajkic A."/>
            <person name="Long A."/>
            <person name="Mobberley J.M."/>
            <person name="Pantry S.N."/>
            <person name="Pazder G."/>
            <person name="Peterson S."/>
            <person name="Quintanilla J.D."/>
            <person name="Sprinkle R."/>
            <person name="Stephens J."/>
            <person name="Thomas P."/>
            <person name="Vaughn R."/>
            <person name="Weber M.J."/>
            <person name="Wooten L.L."/>
        </authorList>
    </citation>
    <scope>NUCLEOTIDE SEQUENCE [LARGE SCALE GENOMIC DNA]</scope>
    <source>
        <strain>ATCC 33889 / DSM 1251</strain>
    </source>
</reference>
<keyword id="KW-0021">Allosteric enzyme</keyword>
<keyword id="KW-0067">ATP-binding</keyword>
<keyword id="KW-0963">Cytoplasm</keyword>
<keyword id="KW-0418">Kinase</keyword>
<keyword id="KW-0547">Nucleotide-binding</keyword>
<keyword id="KW-0665">Pyrimidine biosynthesis</keyword>
<keyword id="KW-1185">Reference proteome</keyword>
<keyword id="KW-0808">Transferase</keyword>
<feature type="chain" id="PRO_0000323961" description="Uridylate kinase">
    <location>
        <begin position="1"/>
        <end position="237"/>
    </location>
</feature>
<feature type="region of interest" description="Involved in allosteric activation by GTP" evidence="1">
    <location>
        <begin position="17"/>
        <end position="22"/>
    </location>
</feature>
<feature type="binding site" evidence="1">
    <location>
        <begin position="9"/>
        <end position="12"/>
    </location>
    <ligand>
        <name>ATP</name>
        <dbReference type="ChEBI" id="CHEBI:30616"/>
    </ligand>
</feature>
<feature type="binding site" evidence="1">
    <location>
        <position position="51"/>
    </location>
    <ligand>
        <name>UMP</name>
        <dbReference type="ChEBI" id="CHEBI:57865"/>
    </ligand>
</feature>
<feature type="binding site" evidence="1">
    <location>
        <position position="52"/>
    </location>
    <ligand>
        <name>ATP</name>
        <dbReference type="ChEBI" id="CHEBI:30616"/>
    </ligand>
</feature>
<feature type="binding site" evidence="1">
    <location>
        <position position="56"/>
    </location>
    <ligand>
        <name>ATP</name>
        <dbReference type="ChEBI" id="CHEBI:30616"/>
    </ligand>
</feature>
<feature type="binding site" evidence="1">
    <location>
        <position position="72"/>
    </location>
    <ligand>
        <name>UMP</name>
        <dbReference type="ChEBI" id="CHEBI:57865"/>
    </ligand>
</feature>
<feature type="binding site" evidence="1">
    <location>
        <begin position="133"/>
        <end position="140"/>
    </location>
    <ligand>
        <name>UMP</name>
        <dbReference type="ChEBI" id="CHEBI:57865"/>
    </ligand>
</feature>
<feature type="binding site" evidence="1">
    <location>
        <position position="160"/>
    </location>
    <ligand>
        <name>ATP</name>
        <dbReference type="ChEBI" id="CHEBI:30616"/>
    </ligand>
</feature>
<feature type="binding site" evidence="1">
    <location>
        <position position="166"/>
    </location>
    <ligand>
        <name>ATP</name>
        <dbReference type="ChEBI" id="CHEBI:30616"/>
    </ligand>
</feature>
<feature type="binding site" evidence="1">
    <location>
        <position position="169"/>
    </location>
    <ligand>
        <name>ATP</name>
        <dbReference type="ChEBI" id="CHEBI:30616"/>
    </ligand>
</feature>
<accession>Q30SN5</accession>
<dbReference type="EC" id="2.7.4.22" evidence="1"/>
<dbReference type="EMBL" id="CP000153">
    <property type="protein sequence ID" value="ABB43996.1"/>
    <property type="molecule type" value="Genomic_DNA"/>
</dbReference>
<dbReference type="RefSeq" id="WP_011372350.1">
    <property type="nucleotide sequence ID" value="NC_007575.1"/>
</dbReference>
<dbReference type="SMR" id="Q30SN5"/>
<dbReference type="STRING" id="326298.Suden_0717"/>
<dbReference type="KEGG" id="tdn:Suden_0717"/>
<dbReference type="eggNOG" id="COG0528">
    <property type="taxonomic scope" value="Bacteria"/>
</dbReference>
<dbReference type="HOGENOM" id="CLU_033861_0_0_7"/>
<dbReference type="OrthoDB" id="9807458at2"/>
<dbReference type="UniPathway" id="UPA00159">
    <property type="reaction ID" value="UER00275"/>
</dbReference>
<dbReference type="Proteomes" id="UP000002714">
    <property type="component" value="Chromosome"/>
</dbReference>
<dbReference type="GO" id="GO:0005829">
    <property type="term" value="C:cytosol"/>
    <property type="evidence" value="ECO:0007669"/>
    <property type="project" value="TreeGrafter"/>
</dbReference>
<dbReference type="GO" id="GO:0005524">
    <property type="term" value="F:ATP binding"/>
    <property type="evidence" value="ECO:0007669"/>
    <property type="project" value="UniProtKB-KW"/>
</dbReference>
<dbReference type="GO" id="GO:0033862">
    <property type="term" value="F:UMP kinase activity"/>
    <property type="evidence" value="ECO:0007669"/>
    <property type="project" value="UniProtKB-EC"/>
</dbReference>
<dbReference type="GO" id="GO:0044210">
    <property type="term" value="P:'de novo' CTP biosynthetic process"/>
    <property type="evidence" value="ECO:0007669"/>
    <property type="project" value="UniProtKB-UniRule"/>
</dbReference>
<dbReference type="GO" id="GO:0006225">
    <property type="term" value="P:UDP biosynthetic process"/>
    <property type="evidence" value="ECO:0007669"/>
    <property type="project" value="TreeGrafter"/>
</dbReference>
<dbReference type="CDD" id="cd04254">
    <property type="entry name" value="AAK_UMPK-PyrH-Ec"/>
    <property type="match status" value="1"/>
</dbReference>
<dbReference type="FunFam" id="3.40.1160.10:FF:000001">
    <property type="entry name" value="Uridylate kinase"/>
    <property type="match status" value="1"/>
</dbReference>
<dbReference type="Gene3D" id="3.40.1160.10">
    <property type="entry name" value="Acetylglutamate kinase-like"/>
    <property type="match status" value="1"/>
</dbReference>
<dbReference type="HAMAP" id="MF_01220_B">
    <property type="entry name" value="PyrH_B"/>
    <property type="match status" value="1"/>
</dbReference>
<dbReference type="InterPro" id="IPR036393">
    <property type="entry name" value="AceGlu_kinase-like_sf"/>
</dbReference>
<dbReference type="InterPro" id="IPR001048">
    <property type="entry name" value="Asp/Glu/Uridylate_kinase"/>
</dbReference>
<dbReference type="InterPro" id="IPR011817">
    <property type="entry name" value="Uridylate_kinase"/>
</dbReference>
<dbReference type="InterPro" id="IPR015963">
    <property type="entry name" value="Uridylate_kinase_bac"/>
</dbReference>
<dbReference type="NCBIfam" id="TIGR02075">
    <property type="entry name" value="pyrH_bact"/>
    <property type="match status" value="1"/>
</dbReference>
<dbReference type="PANTHER" id="PTHR42833">
    <property type="entry name" value="URIDYLATE KINASE"/>
    <property type="match status" value="1"/>
</dbReference>
<dbReference type="PANTHER" id="PTHR42833:SF4">
    <property type="entry name" value="URIDYLATE KINASE PUMPKIN, CHLOROPLASTIC"/>
    <property type="match status" value="1"/>
</dbReference>
<dbReference type="Pfam" id="PF00696">
    <property type="entry name" value="AA_kinase"/>
    <property type="match status" value="1"/>
</dbReference>
<dbReference type="PIRSF" id="PIRSF005650">
    <property type="entry name" value="Uridylate_kin"/>
    <property type="match status" value="1"/>
</dbReference>
<dbReference type="SUPFAM" id="SSF53633">
    <property type="entry name" value="Carbamate kinase-like"/>
    <property type="match status" value="1"/>
</dbReference>
<name>PYRH_SULDN</name>
<evidence type="ECO:0000255" key="1">
    <source>
        <dbReference type="HAMAP-Rule" id="MF_01220"/>
    </source>
</evidence>
<comment type="function">
    <text evidence="1">Catalyzes the reversible phosphorylation of UMP to UDP.</text>
</comment>
<comment type="catalytic activity">
    <reaction evidence="1">
        <text>UMP + ATP = UDP + ADP</text>
        <dbReference type="Rhea" id="RHEA:24400"/>
        <dbReference type="ChEBI" id="CHEBI:30616"/>
        <dbReference type="ChEBI" id="CHEBI:57865"/>
        <dbReference type="ChEBI" id="CHEBI:58223"/>
        <dbReference type="ChEBI" id="CHEBI:456216"/>
        <dbReference type="EC" id="2.7.4.22"/>
    </reaction>
</comment>
<comment type="activity regulation">
    <text evidence="1">Allosterically activated by GTP. Inhibited by UTP.</text>
</comment>
<comment type="pathway">
    <text evidence="1">Pyrimidine metabolism; CTP biosynthesis via de novo pathway; UDP from UMP (UMPK route): step 1/1.</text>
</comment>
<comment type="subunit">
    <text evidence="1">Homohexamer.</text>
</comment>
<comment type="subcellular location">
    <subcellularLocation>
        <location evidence="1">Cytoplasm</location>
    </subcellularLocation>
</comment>
<comment type="similarity">
    <text evidence="1">Belongs to the UMP kinase family.</text>
</comment>
<organism>
    <name type="scientific">Sulfurimonas denitrificans (strain ATCC 33889 / DSM 1251)</name>
    <name type="common">Thiomicrospira denitrificans (strain ATCC 33889 / DSM 1251)</name>
    <dbReference type="NCBI Taxonomy" id="326298"/>
    <lineage>
        <taxon>Bacteria</taxon>
        <taxon>Pseudomonadati</taxon>
        <taxon>Campylobacterota</taxon>
        <taxon>Epsilonproteobacteria</taxon>
        <taxon>Campylobacterales</taxon>
        <taxon>Sulfurimonadaceae</taxon>
        <taxon>Sulfurimonas</taxon>
    </lineage>
</organism>
<gene>
    <name evidence="1" type="primary">pyrH</name>
    <name type="ordered locus">Suden_0717</name>
</gene>
<proteinExistence type="inferred from homology"/>